<keyword id="KW-0046">Antibiotic resistance</keyword>
<keyword id="KW-1015">Disulfide bond</keyword>
<keyword id="KW-0378">Hydrolase</keyword>
<keyword id="KW-0732">Signal</keyword>
<name>BLA8_ECOLX</name>
<comment type="function">
    <text>SHV enzymes hydrolyze broad spectrum cephalosporins notably cefotaxime and ceftazidime.</text>
</comment>
<comment type="catalytic activity">
    <reaction evidence="3">
        <text>a beta-lactam + H2O = a substituted beta-amino acid</text>
        <dbReference type="Rhea" id="RHEA:20401"/>
        <dbReference type="ChEBI" id="CHEBI:15377"/>
        <dbReference type="ChEBI" id="CHEBI:35627"/>
        <dbReference type="ChEBI" id="CHEBI:140347"/>
        <dbReference type="EC" id="3.5.2.6"/>
    </reaction>
</comment>
<comment type="miscellaneous">
    <text evidence="5">The class A beta-lactamase family has a specific amino-acid numbering system, sometimes called Ambler or ABL numbering and often misspelt as Amber. A multiple sequence alignment was used to derive a consensus sequence and then the consensus was numbered taking into account insertions and deletions. This allows use of identical numbers, e.g. for active site residues, despite differences in protein length. UniProt always uses natural numbering of residues, hence there appear to be differences in numbering between this entry and some papers.</text>
</comment>
<comment type="similarity">
    <text evidence="4">Belongs to the class-A beta-lactamase family.</text>
</comment>
<organism>
    <name type="scientific">Escherichia coli</name>
    <dbReference type="NCBI Taxonomy" id="562"/>
    <lineage>
        <taxon>Bacteria</taxon>
        <taxon>Pseudomonadati</taxon>
        <taxon>Pseudomonadota</taxon>
        <taxon>Gammaproteobacteria</taxon>
        <taxon>Enterobacterales</taxon>
        <taxon>Enterobacteriaceae</taxon>
        <taxon>Escherichia</taxon>
    </lineage>
</organism>
<evidence type="ECO:0000250" key="1"/>
<evidence type="ECO:0000255" key="2"/>
<evidence type="ECO:0000255" key="3">
    <source>
        <dbReference type="PROSITE-ProRule" id="PRU10101"/>
    </source>
</evidence>
<evidence type="ECO:0000305" key="4"/>
<evidence type="ECO:0000305" key="5">
    <source>
    </source>
</evidence>
<gene>
    <name type="primary">bla</name>
    <name type="synonym">shv8</name>
</gene>
<proteinExistence type="inferred from homology"/>
<dbReference type="EC" id="3.5.2.6"/>
<dbReference type="EMBL" id="U92041">
    <property type="protein sequence ID" value="AAB51384.1"/>
    <property type="molecule type" value="Genomic_DNA"/>
</dbReference>
<dbReference type="RefSeq" id="WP_063864710.1">
    <property type="nucleotide sequence ID" value="NG_050115.1"/>
</dbReference>
<dbReference type="SMR" id="O08337"/>
<dbReference type="CARD" id="ARO:3001067">
    <property type="molecule name" value="SHV-8"/>
    <property type="mechanism identifier" value="ARO:0001004"/>
    <property type="mechanism name" value="antibiotic inactivation"/>
</dbReference>
<dbReference type="KEGG" id="ag:AAB51384"/>
<dbReference type="GO" id="GO:0008800">
    <property type="term" value="F:beta-lactamase activity"/>
    <property type="evidence" value="ECO:0007669"/>
    <property type="project" value="UniProtKB-EC"/>
</dbReference>
<dbReference type="GO" id="GO:0030655">
    <property type="term" value="P:beta-lactam antibiotic catabolic process"/>
    <property type="evidence" value="ECO:0007669"/>
    <property type="project" value="InterPro"/>
</dbReference>
<dbReference type="GO" id="GO:0046677">
    <property type="term" value="P:response to antibiotic"/>
    <property type="evidence" value="ECO:0007669"/>
    <property type="project" value="UniProtKB-KW"/>
</dbReference>
<dbReference type="Gene3D" id="3.40.710.10">
    <property type="entry name" value="DD-peptidase/beta-lactamase superfamily"/>
    <property type="match status" value="1"/>
</dbReference>
<dbReference type="InterPro" id="IPR012338">
    <property type="entry name" value="Beta-lactam/transpept-like"/>
</dbReference>
<dbReference type="InterPro" id="IPR045155">
    <property type="entry name" value="Beta-lactam_cat"/>
</dbReference>
<dbReference type="InterPro" id="IPR000871">
    <property type="entry name" value="Beta-lactam_class-A"/>
</dbReference>
<dbReference type="InterPro" id="IPR023650">
    <property type="entry name" value="Beta-lactam_class-A_AS"/>
</dbReference>
<dbReference type="NCBIfam" id="NF033103">
    <property type="entry name" value="bla_class_A"/>
    <property type="match status" value="1"/>
</dbReference>
<dbReference type="NCBIfam" id="NF000285">
    <property type="entry name" value="SHV"/>
    <property type="match status" value="1"/>
</dbReference>
<dbReference type="NCBIfam" id="NF012143">
    <property type="entry name" value="SHV_LEN_OKP"/>
    <property type="match status" value="1"/>
</dbReference>
<dbReference type="PANTHER" id="PTHR35333">
    <property type="entry name" value="BETA-LACTAMASE"/>
    <property type="match status" value="1"/>
</dbReference>
<dbReference type="PANTHER" id="PTHR35333:SF3">
    <property type="entry name" value="BETA-LACTAMASE-TYPE TRANSPEPTIDASE FOLD CONTAINING PROTEIN"/>
    <property type="match status" value="1"/>
</dbReference>
<dbReference type="Pfam" id="PF13354">
    <property type="entry name" value="Beta-lactamase2"/>
    <property type="match status" value="1"/>
</dbReference>
<dbReference type="PRINTS" id="PR00118">
    <property type="entry name" value="BLACTAMASEA"/>
</dbReference>
<dbReference type="SUPFAM" id="SSF56601">
    <property type="entry name" value="beta-lactamase/transpeptidase-like"/>
    <property type="match status" value="1"/>
</dbReference>
<dbReference type="PROSITE" id="PS00146">
    <property type="entry name" value="BETA_LACTAMASE_A"/>
    <property type="match status" value="1"/>
</dbReference>
<protein>
    <recommendedName>
        <fullName>Beta-lactamase SHV-8</fullName>
        <ecNumber>3.5.2.6</ecNumber>
    </recommendedName>
</protein>
<accession>O08337</accession>
<sequence length="286" mass="31223">MRYIRLCIISLLATLPLAVHASPQPLEQIKLSESQLSGRVGMIEMDLASGRTLTAWRADERFPMMSTFKVVLCGAVLARVDAGDEQLERKIHYRQQDLVDYSPVSEKHLADGMTVGELCAAAITMSDNSAANLLLATVGGPAGLTAFLRQIGDNVTRLDRWETELNEALPGDARNTTTPASMAATLRKLLTSQRLSARSQRQLLQWMVDDRVAGPLIRSVLPAGWFIADKTGAGERGARGIVALLGPNNKAERIVVIYLRDTPASMAERNQQIAGIGAALIEHWQR</sequence>
<feature type="signal peptide" evidence="2">
    <location>
        <begin position="1"/>
        <end position="21"/>
    </location>
</feature>
<feature type="chain" id="PRO_0000016986" description="Beta-lactamase SHV-8">
    <location>
        <begin position="22"/>
        <end position="286"/>
    </location>
</feature>
<feature type="active site" description="Acyl-ester intermediate" evidence="3">
    <location>
        <position position="66"/>
    </location>
</feature>
<feature type="active site" description="Proton acceptor" evidence="1">
    <location>
        <position position="164"/>
    </location>
</feature>
<feature type="binding site" evidence="1">
    <location>
        <begin position="230"/>
        <end position="232"/>
    </location>
    <ligand>
        <name>substrate</name>
    </ligand>
</feature>
<feature type="disulfide bond" evidence="1">
    <location>
        <begin position="73"/>
        <end position="119"/>
    </location>
</feature>
<reference key="1">
    <citation type="journal article" date="1997" name="Antimicrob. Agents Chemother.">
        <title>Evolution of extended-spectrum beta-lactam resistance (SHV-8) in a strain of Escherichia coli during multiple episodes of bacteremia.</title>
        <authorList>
            <person name="Rasheed J.K."/>
            <person name="Jay C."/>
            <person name="Metchock B."/>
            <person name="Berkowitz F."/>
            <person name="Weigel L."/>
            <person name="Crellin J."/>
            <person name="Steward C."/>
            <person name="Hill B."/>
            <person name="Medeiros A.A."/>
            <person name="Tenover F.C."/>
        </authorList>
    </citation>
    <scope>NUCLEOTIDE SEQUENCE [GENOMIC DNA]</scope>
</reference>
<reference key="2">
    <citation type="journal article" date="1991" name="Biochem. J.">
        <title>A standard numbering scheme for the class A beta-lactamases.</title>
        <authorList>
            <person name="Ambler R.P."/>
            <person name="Coulson A.F."/>
            <person name="Frere J.M."/>
            <person name="Ghuysen J.M."/>
            <person name="Joris B."/>
            <person name="Forsman M."/>
            <person name="Levesque R.C."/>
            <person name="Tiraby G."/>
            <person name="Waley S.G."/>
        </authorList>
    </citation>
    <scope>AMINO ACID NUMBERING SCHEME</scope>
</reference>